<name>MURQ_STAEQ</name>
<sequence>MNHLTTETRNIQTMHLDEMNLSDALKTMNQEDQLVPKAIEPVIPNLTKVIESAIQRFNNGGRIIYIGAGTSGRLGVLDAAECVPTFNVSPNDIIGIIAGGQKAMTVAIEGAEDDAEQGAQDLKNIHLQSKDIVVGISASGRTPYVKGALVYANKMNAETVALSCNVHSDISKNSNHVLEINVGPEVLTGSTRLKSGTAQKLVLNMISTMTMIGVGKVYDNLMVDLRPTNQKLIHRSIRIIQDVCDLNHQEAIELYEKSDHNIKIAIVMHLCSTTQQDARLRLKQNNGVIKQAINT</sequence>
<comment type="function">
    <text evidence="1">Specifically catalyzes the cleavage of the D-lactyl ether substituent of MurNAc 6-phosphate, producing GlcNAc 6-phosphate and D-lactate.</text>
</comment>
<comment type="catalytic activity">
    <reaction evidence="1">
        <text>N-acetyl-D-muramate 6-phosphate + H2O = N-acetyl-D-glucosamine 6-phosphate + (R)-lactate</text>
        <dbReference type="Rhea" id="RHEA:26410"/>
        <dbReference type="ChEBI" id="CHEBI:15377"/>
        <dbReference type="ChEBI" id="CHEBI:16004"/>
        <dbReference type="ChEBI" id="CHEBI:57513"/>
        <dbReference type="ChEBI" id="CHEBI:58722"/>
        <dbReference type="EC" id="4.2.1.126"/>
    </reaction>
</comment>
<comment type="pathway">
    <text evidence="1">Amino-sugar metabolism; N-acetylmuramate degradation.</text>
</comment>
<comment type="subunit">
    <text evidence="1">Homodimer.</text>
</comment>
<comment type="miscellaneous">
    <text evidence="1">A lyase-type mechanism (elimination/hydration) is suggested for the cleavage of the lactyl ether bond of MurNAc 6-phosphate, with the formation of an alpha,beta-unsaturated aldehyde intermediate with (E)-stereochemistry, followed by the syn addition of water to give product.</text>
</comment>
<comment type="similarity">
    <text evidence="1">Belongs to the GCKR-like family. MurNAc-6-P etherase subfamily.</text>
</comment>
<reference key="1">
    <citation type="journal article" date="2005" name="J. Bacteriol.">
        <title>Insights on evolution of virulence and resistance from the complete genome analysis of an early methicillin-resistant Staphylococcus aureus strain and a biofilm-producing methicillin-resistant Staphylococcus epidermidis strain.</title>
        <authorList>
            <person name="Gill S.R."/>
            <person name="Fouts D.E."/>
            <person name="Archer G.L."/>
            <person name="Mongodin E.F."/>
            <person name="DeBoy R.T."/>
            <person name="Ravel J."/>
            <person name="Paulsen I.T."/>
            <person name="Kolonay J.F."/>
            <person name="Brinkac L.M."/>
            <person name="Beanan M.J."/>
            <person name="Dodson R.J."/>
            <person name="Daugherty S.C."/>
            <person name="Madupu R."/>
            <person name="Angiuoli S.V."/>
            <person name="Durkin A.S."/>
            <person name="Haft D.H."/>
            <person name="Vamathevan J.J."/>
            <person name="Khouri H."/>
            <person name="Utterback T.R."/>
            <person name="Lee C."/>
            <person name="Dimitrov G."/>
            <person name="Jiang L."/>
            <person name="Qin H."/>
            <person name="Weidman J."/>
            <person name="Tran K."/>
            <person name="Kang K.H."/>
            <person name="Hance I.R."/>
            <person name="Nelson K.E."/>
            <person name="Fraser C.M."/>
        </authorList>
    </citation>
    <scope>NUCLEOTIDE SEQUENCE [LARGE SCALE GENOMIC DNA]</scope>
    <source>
        <strain>ATCC 35984 / DSM 28319 / BCRC 17069 / CCUG 31568 / BM 3577 / RP62A</strain>
    </source>
</reference>
<gene>
    <name evidence="1" type="primary">murQ</name>
    <name type="ordered locus">SERP1899</name>
</gene>
<organism>
    <name type="scientific">Staphylococcus epidermidis (strain ATCC 35984 / DSM 28319 / BCRC 17069 / CCUG 31568 / BM 3577 / RP62A)</name>
    <dbReference type="NCBI Taxonomy" id="176279"/>
    <lineage>
        <taxon>Bacteria</taxon>
        <taxon>Bacillati</taxon>
        <taxon>Bacillota</taxon>
        <taxon>Bacilli</taxon>
        <taxon>Bacillales</taxon>
        <taxon>Staphylococcaceae</taxon>
        <taxon>Staphylococcus</taxon>
    </lineage>
</organism>
<feature type="chain" id="PRO_0000249663" description="N-acetylmuramic acid 6-phosphate etherase">
    <location>
        <begin position="1"/>
        <end position="295"/>
    </location>
</feature>
<feature type="domain" description="SIS" evidence="1">
    <location>
        <begin position="53"/>
        <end position="216"/>
    </location>
</feature>
<feature type="active site" description="Proton donor" evidence="1">
    <location>
        <position position="81"/>
    </location>
</feature>
<feature type="active site" evidence="1">
    <location>
        <position position="112"/>
    </location>
</feature>
<evidence type="ECO:0000255" key="1">
    <source>
        <dbReference type="HAMAP-Rule" id="MF_00068"/>
    </source>
</evidence>
<proteinExistence type="inferred from homology"/>
<keyword id="KW-0119">Carbohydrate metabolism</keyword>
<keyword id="KW-0456">Lyase</keyword>
<keyword id="KW-1185">Reference proteome</keyword>
<protein>
    <recommendedName>
        <fullName evidence="1">N-acetylmuramic acid 6-phosphate etherase</fullName>
        <shortName evidence="1">MurNAc-6-P etherase</shortName>
        <ecNumber evidence="1">4.2.1.126</ecNumber>
    </recommendedName>
    <alternativeName>
        <fullName evidence="1">N-acetylmuramic acid 6-phosphate hydrolase</fullName>
    </alternativeName>
    <alternativeName>
        <fullName evidence="1">N-acetylmuramic acid 6-phosphate lyase</fullName>
    </alternativeName>
</protein>
<accession>Q5HLT3</accession>
<dbReference type="EC" id="4.2.1.126" evidence="1"/>
<dbReference type="EMBL" id="CP000029">
    <property type="protein sequence ID" value="AAW55220.1"/>
    <property type="molecule type" value="Genomic_DNA"/>
</dbReference>
<dbReference type="RefSeq" id="WP_002456966.1">
    <property type="nucleotide sequence ID" value="NC_002976.3"/>
</dbReference>
<dbReference type="SMR" id="Q5HLT3"/>
<dbReference type="STRING" id="176279.SERP1899"/>
<dbReference type="GeneID" id="50018009"/>
<dbReference type="KEGG" id="ser:SERP1899"/>
<dbReference type="eggNOG" id="COG2103">
    <property type="taxonomic scope" value="Bacteria"/>
</dbReference>
<dbReference type="HOGENOM" id="CLU_049049_1_1_9"/>
<dbReference type="UniPathway" id="UPA00342"/>
<dbReference type="Proteomes" id="UP000000531">
    <property type="component" value="Chromosome"/>
</dbReference>
<dbReference type="GO" id="GO:0097367">
    <property type="term" value="F:carbohydrate derivative binding"/>
    <property type="evidence" value="ECO:0007669"/>
    <property type="project" value="InterPro"/>
</dbReference>
<dbReference type="GO" id="GO:0016835">
    <property type="term" value="F:carbon-oxygen lyase activity"/>
    <property type="evidence" value="ECO:0007669"/>
    <property type="project" value="UniProtKB-UniRule"/>
</dbReference>
<dbReference type="GO" id="GO:0016803">
    <property type="term" value="F:ether hydrolase activity"/>
    <property type="evidence" value="ECO:0007669"/>
    <property type="project" value="TreeGrafter"/>
</dbReference>
<dbReference type="GO" id="GO:0046348">
    <property type="term" value="P:amino sugar catabolic process"/>
    <property type="evidence" value="ECO:0007669"/>
    <property type="project" value="InterPro"/>
</dbReference>
<dbReference type="GO" id="GO:0097173">
    <property type="term" value="P:N-acetylmuramic acid catabolic process"/>
    <property type="evidence" value="ECO:0007669"/>
    <property type="project" value="UniProtKB-UniPathway"/>
</dbReference>
<dbReference type="GO" id="GO:0009254">
    <property type="term" value="P:peptidoglycan turnover"/>
    <property type="evidence" value="ECO:0007669"/>
    <property type="project" value="TreeGrafter"/>
</dbReference>
<dbReference type="CDD" id="cd05007">
    <property type="entry name" value="SIS_Etherase"/>
    <property type="match status" value="1"/>
</dbReference>
<dbReference type="FunFam" id="1.10.8.1080:FF:000001">
    <property type="entry name" value="N-acetylmuramic acid 6-phosphate etherase"/>
    <property type="match status" value="1"/>
</dbReference>
<dbReference type="FunFam" id="3.40.50.10490:FF:000014">
    <property type="entry name" value="N-acetylmuramic acid 6-phosphate etherase"/>
    <property type="match status" value="1"/>
</dbReference>
<dbReference type="Gene3D" id="1.10.8.1080">
    <property type="match status" value="1"/>
</dbReference>
<dbReference type="Gene3D" id="3.40.50.10490">
    <property type="entry name" value="Glucose-6-phosphate isomerase like protein, domain 1"/>
    <property type="match status" value="1"/>
</dbReference>
<dbReference type="HAMAP" id="MF_00068">
    <property type="entry name" value="MurQ"/>
    <property type="match status" value="1"/>
</dbReference>
<dbReference type="InterPro" id="IPR005488">
    <property type="entry name" value="Etherase_MurQ"/>
</dbReference>
<dbReference type="InterPro" id="IPR005486">
    <property type="entry name" value="Glucokinase_regulatory_CS"/>
</dbReference>
<dbReference type="InterPro" id="IPR040190">
    <property type="entry name" value="MURQ/GCKR"/>
</dbReference>
<dbReference type="InterPro" id="IPR001347">
    <property type="entry name" value="SIS_dom"/>
</dbReference>
<dbReference type="InterPro" id="IPR046348">
    <property type="entry name" value="SIS_dom_sf"/>
</dbReference>
<dbReference type="NCBIfam" id="TIGR00274">
    <property type="entry name" value="N-acetylmuramic acid 6-phosphate etherase"/>
    <property type="match status" value="1"/>
</dbReference>
<dbReference type="NCBIfam" id="NF003915">
    <property type="entry name" value="PRK05441.1"/>
    <property type="match status" value="1"/>
</dbReference>
<dbReference type="NCBIfam" id="NF009222">
    <property type="entry name" value="PRK12570.1"/>
    <property type="match status" value="1"/>
</dbReference>
<dbReference type="PANTHER" id="PTHR10088">
    <property type="entry name" value="GLUCOKINASE REGULATORY PROTEIN"/>
    <property type="match status" value="1"/>
</dbReference>
<dbReference type="PANTHER" id="PTHR10088:SF4">
    <property type="entry name" value="GLUCOKINASE REGULATORY PROTEIN"/>
    <property type="match status" value="1"/>
</dbReference>
<dbReference type="Pfam" id="PF20741">
    <property type="entry name" value="GKRP-like_C"/>
    <property type="match status" value="1"/>
</dbReference>
<dbReference type="Pfam" id="PF22645">
    <property type="entry name" value="GKRP_SIS_N"/>
    <property type="match status" value="1"/>
</dbReference>
<dbReference type="SUPFAM" id="SSF53697">
    <property type="entry name" value="SIS domain"/>
    <property type="match status" value="1"/>
</dbReference>
<dbReference type="PROSITE" id="PS01272">
    <property type="entry name" value="GCKR"/>
    <property type="match status" value="1"/>
</dbReference>
<dbReference type="PROSITE" id="PS51464">
    <property type="entry name" value="SIS"/>
    <property type="match status" value="1"/>
</dbReference>